<gene>
    <name evidence="1" type="primary">ruvB</name>
    <name type="ordered locus">Cyan7425_2503</name>
</gene>
<proteinExistence type="inferred from homology"/>
<feature type="chain" id="PRO_1000195216" description="Holliday junction branch migration complex subunit RuvB">
    <location>
        <begin position="1"/>
        <end position="370"/>
    </location>
</feature>
<feature type="region of interest" description="Disordered" evidence="2">
    <location>
        <begin position="1"/>
        <end position="53"/>
    </location>
</feature>
<feature type="region of interest" description="Large ATPase domain (RuvB-L)" evidence="1">
    <location>
        <begin position="13"/>
        <end position="214"/>
    </location>
</feature>
<feature type="region of interest" description="Small ATPAse domain (RuvB-S)" evidence="1">
    <location>
        <begin position="215"/>
        <end position="285"/>
    </location>
</feature>
<feature type="region of interest" description="Head domain (RuvB-H)" evidence="1">
    <location>
        <begin position="288"/>
        <end position="370"/>
    </location>
</feature>
<feature type="compositionally biased region" description="Basic and acidic residues" evidence="2">
    <location>
        <begin position="43"/>
        <end position="53"/>
    </location>
</feature>
<feature type="binding site" evidence="1">
    <location>
        <position position="53"/>
    </location>
    <ligand>
        <name>ATP</name>
        <dbReference type="ChEBI" id="CHEBI:30616"/>
    </ligand>
</feature>
<feature type="binding site" evidence="1">
    <location>
        <position position="54"/>
    </location>
    <ligand>
        <name>ATP</name>
        <dbReference type="ChEBI" id="CHEBI:30616"/>
    </ligand>
</feature>
<feature type="binding site" evidence="1">
    <location>
        <position position="95"/>
    </location>
    <ligand>
        <name>ATP</name>
        <dbReference type="ChEBI" id="CHEBI:30616"/>
    </ligand>
</feature>
<feature type="binding site" evidence="1">
    <location>
        <position position="98"/>
    </location>
    <ligand>
        <name>ATP</name>
        <dbReference type="ChEBI" id="CHEBI:30616"/>
    </ligand>
</feature>
<feature type="binding site" evidence="1">
    <location>
        <position position="99"/>
    </location>
    <ligand>
        <name>ATP</name>
        <dbReference type="ChEBI" id="CHEBI:30616"/>
    </ligand>
</feature>
<feature type="binding site" evidence="1">
    <location>
        <position position="99"/>
    </location>
    <ligand>
        <name>Mg(2+)</name>
        <dbReference type="ChEBI" id="CHEBI:18420"/>
    </ligand>
</feature>
<feature type="binding site" evidence="1">
    <location>
        <position position="100"/>
    </location>
    <ligand>
        <name>ATP</name>
        <dbReference type="ChEBI" id="CHEBI:30616"/>
    </ligand>
</feature>
<feature type="binding site" evidence="1">
    <location>
        <begin position="161"/>
        <end position="163"/>
    </location>
    <ligand>
        <name>ATP</name>
        <dbReference type="ChEBI" id="CHEBI:30616"/>
    </ligand>
</feature>
<feature type="binding site" evidence="1">
    <location>
        <position position="204"/>
    </location>
    <ligand>
        <name>ATP</name>
        <dbReference type="ChEBI" id="CHEBI:30616"/>
    </ligand>
</feature>
<feature type="binding site" evidence="1">
    <location>
        <position position="214"/>
    </location>
    <ligand>
        <name>ATP</name>
        <dbReference type="ChEBI" id="CHEBI:30616"/>
    </ligand>
</feature>
<feature type="binding site" evidence="1">
    <location>
        <position position="251"/>
    </location>
    <ligand>
        <name>ATP</name>
        <dbReference type="ChEBI" id="CHEBI:30616"/>
    </ligand>
</feature>
<feature type="binding site" evidence="1">
    <location>
        <position position="343"/>
    </location>
    <ligand>
        <name>DNA</name>
        <dbReference type="ChEBI" id="CHEBI:16991"/>
    </ligand>
</feature>
<feature type="binding site" evidence="1">
    <location>
        <position position="348"/>
    </location>
    <ligand>
        <name>DNA</name>
        <dbReference type="ChEBI" id="CHEBI:16991"/>
    </ligand>
</feature>
<name>RUVB_CYAP4</name>
<protein>
    <recommendedName>
        <fullName evidence="1">Holliday junction branch migration complex subunit RuvB</fullName>
        <ecNumber evidence="1">3.6.4.-</ecNumber>
    </recommendedName>
</protein>
<organism>
    <name type="scientific">Cyanothece sp. (strain PCC 7425 / ATCC 29141)</name>
    <dbReference type="NCBI Taxonomy" id="395961"/>
    <lineage>
        <taxon>Bacteria</taxon>
        <taxon>Bacillati</taxon>
        <taxon>Cyanobacteriota</taxon>
        <taxon>Cyanophyceae</taxon>
        <taxon>Gomontiellales</taxon>
        <taxon>Cyanothecaceae</taxon>
        <taxon>Cyanothece</taxon>
    </lineage>
</organism>
<evidence type="ECO:0000255" key="1">
    <source>
        <dbReference type="HAMAP-Rule" id="MF_00016"/>
    </source>
</evidence>
<evidence type="ECO:0000256" key="2">
    <source>
        <dbReference type="SAM" id="MobiDB-lite"/>
    </source>
</evidence>
<keyword id="KW-0067">ATP-binding</keyword>
<keyword id="KW-0963">Cytoplasm</keyword>
<keyword id="KW-0227">DNA damage</keyword>
<keyword id="KW-0233">DNA recombination</keyword>
<keyword id="KW-0234">DNA repair</keyword>
<keyword id="KW-0238">DNA-binding</keyword>
<keyword id="KW-0378">Hydrolase</keyword>
<keyword id="KW-0547">Nucleotide-binding</keyword>
<sequence>MAILSSQKQPLEPEPSKNPQSVQQPGLPPSTPEQGLLTAEVSPEERLSRTDDIRPQRLADYVGQKELKEVLQIAIQAAQSRREPLDHLLLYGPPGLGKTTISLILAAEMGVSCKVTSAPALERPRDIVGLLVNLKPGDVLFIDEIHRLARMTEELLYPAMEDFRLDITIGKGQSARTRSLPLPPFTLVGATTRVGSLTSPLRDRFGLIQRLRFYEPEELSQIILRTASLLKTELTPSAALEIARRSRGTPRIANRLLKRVRDFAEVKAAGTITETIASEALQLFNVDPCGLDWTDRRLLTVMIEHYGGGPVGLETIAAATGEEAQTIEEVYEPYLLQIGYLNRTPRGRVATLAAWKHLGYTPPDGQLSLL</sequence>
<accession>B8HY57</accession>
<comment type="function">
    <text evidence="1">The RuvA-RuvB-RuvC complex processes Holliday junction (HJ) DNA during genetic recombination and DNA repair, while the RuvA-RuvB complex plays an important role in the rescue of blocked DNA replication forks via replication fork reversal (RFR). RuvA specifically binds to HJ cruciform DNA, conferring on it an open structure. The RuvB hexamer acts as an ATP-dependent pump, pulling dsDNA into and through the RuvAB complex. RuvB forms 2 homohexamers on either side of HJ DNA bound by 1 or 2 RuvA tetramers; 4 subunits per hexamer contact DNA at a time. Coordinated motions by a converter formed by DNA-disengaged RuvB subunits stimulates ATP hydrolysis and nucleotide exchange. Immobilization of the converter enables RuvB to convert the ATP-contained energy into a lever motion, pulling 2 nucleotides of DNA out of the RuvA tetramer per ATP hydrolyzed, thus driving DNA branch migration. The RuvB motors rotate together with the DNA substrate, which together with the progressing nucleotide cycle form the mechanistic basis for DNA recombination by continuous HJ branch migration. Branch migration allows RuvC to scan DNA until it finds its consensus sequence, where it cleaves and resolves cruciform DNA.</text>
</comment>
<comment type="catalytic activity">
    <reaction evidence="1">
        <text>ATP + H2O = ADP + phosphate + H(+)</text>
        <dbReference type="Rhea" id="RHEA:13065"/>
        <dbReference type="ChEBI" id="CHEBI:15377"/>
        <dbReference type="ChEBI" id="CHEBI:15378"/>
        <dbReference type="ChEBI" id="CHEBI:30616"/>
        <dbReference type="ChEBI" id="CHEBI:43474"/>
        <dbReference type="ChEBI" id="CHEBI:456216"/>
    </reaction>
</comment>
<comment type="subunit">
    <text evidence="1">Homohexamer. Forms an RuvA(8)-RuvB(12)-Holliday junction (HJ) complex. HJ DNA is sandwiched between 2 RuvA tetramers; dsDNA enters through RuvA and exits via RuvB. An RuvB hexamer assembles on each DNA strand where it exits the tetramer. Each RuvB hexamer is contacted by two RuvA subunits (via domain III) on 2 adjacent RuvB subunits; this complex drives branch migration. In the full resolvosome a probable DNA-RuvA(4)-RuvB(12)-RuvC(2) complex forms which resolves the HJ.</text>
</comment>
<comment type="subcellular location">
    <subcellularLocation>
        <location evidence="1">Cytoplasm</location>
    </subcellularLocation>
</comment>
<comment type="domain">
    <text evidence="1">Has 3 domains, the large (RuvB-L) and small ATPase (RuvB-S) domains and the C-terminal head (RuvB-H) domain. The head domain binds DNA, while the ATPase domains jointly bind ATP, ADP or are empty depending on the state of the subunit in the translocation cycle. During a single DNA translocation step the structure of each domain remains the same, but their relative positions change.</text>
</comment>
<comment type="similarity">
    <text evidence="1">Belongs to the RuvB family.</text>
</comment>
<dbReference type="EC" id="3.6.4.-" evidence="1"/>
<dbReference type="EMBL" id="CP001344">
    <property type="protein sequence ID" value="ACL44860.1"/>
    <property type="molecule type" value="Genomic_DNA"/>
</dbReference>
<dbReference type="SMR" id="B8HY57"/>
<dbReference type="STRING" id="395961.Cyan7425_2503"/>
<dbReference type="KEGG" id="cyn:Cyan7425_2503"/>
<dbReference type="eggNOG" id="COG2255">
    <property type="taxonomic scope" value="Bacteria"/>
</dbReference>
<dbReference type="HOGENOM" id="CLU_055599_1_0_3"/>
<dbReference type="OrthoDB" id="9804478at2"/>
<dbReference type="GO" id="GO:0005737">
    <property type="term" value="C:cytoplasm"/>
    <property type="evidence" value="ECO:0007669"/>
    <property type="project" value="UniProtKB-SubCell"/>
</dbReference>
<dbReference type="GO" id="GO:0048476">
    <property type="term" value="C:Holliday junction resolvase complex"/>
    <property type="evidence" value="ECO:0007669"/>
    <property type="project" value="UniProtKB-UniRule"/>
</dbReference>
<dbReference type="GO" id="GO:0005524">
    <property type="term" value="F:ATP binding"/>
    <property type="evidence" value="ECO:0007669"/>
    <property type="project" value="UniProtKB-UniRule"/>
</dbReference>
<dbReference type="GO" id="GO:0016887">
    <property type="term" value="F:ATP hydrolysis activity"/>
    <property type="evidence" value="ECO:0007669"/>
    <property type="project" value="InterPro"/>
</dbReference>
<dbReference type="GO" id="GO:0000400">
    <property type="term" value="F:four-way junction DNA binding"/>
    <property type="evidence" value="ECO:0007669"/>
    <property type="project" value="UniProtKB-UniRule"/>
</dbReference>
<dbReference type="GO" id="GO:0009378">
    <property type="term" value="F:four-way junction helicase activity"/>
    <property type="evidence" value="ECO:0007669"/>
    <property type="project" value="InterPro"/>
</dbReference>
<dbReference type="GO" id="GO:0006310">
    <property type="term" value="P:DNA recombination"/>
    <property type="evidence" value="ECO:0007669"/>
    <property type="project" value="UniProtKB-UniRule"/>
</dbReference>
<dbReference type="GO" id="GO:0006281">
    <property type="term" value="P:DNA repair"/>
    <property type="evidence" value="ECO:0007669"/>
    <property type="project" value="UniProtKB-UniRule"/>
</dbReference>
<dbReference type="CDD" id="cd00009">
    <property type="entry name" value="AAA"/>
    <property type="match status" value="1"/>
</dbReference>
<dbReference type="Gene3D" id="1.10.8.60">
    <property type="match status" value="1"/>
</dbReference>
<dbReference type="Gene3D" id="3.40.50.300">
    <property type="entry name" value="P-loop containing nucleotide triphosphate hydrolases"/>
    <property type="match status" value="1"/>
</dbReference>
<dbReference type="Gene3D" id="1.10.10.10">
    <property type="entry name" value="Winged helix-like DNA-binding domain superfamily/Winged helix DNA-binding domain"/>
    <property type="match status" value="1"/>
</dbReference>
<dbReference type="HAMAP" id="MF_00016">
    <property type="entry name" value="DNA_HJ_migration_RuvB"/>
    <property type="match status" value="1"/>
</dbReference>
<dbReference type="InterPro" id="IPR003593">
    <property type="entry name" value="AAA+_ATPase"/>
</dbReference>
<dbReference type="InterPro" id="IPR041445">
    <property type="entry name" value="AAA_lid_4"/>
</dbReference>
<dbReference type="InterPro" id="IPR004605">
    <property type="entry name" value="DNA_helicase_Holl-junc_RuvB"/>
</dbReference>
<dbReference type="InterPro" id="IPR027417">
    <property type="entry name" value="P-loop_NTPase"/>
</dbReference>
<dbReference type="InterPro" id="IPR008824">
    <property type="entry name" value="RuvB-like_N"/>
</dbReference>
<dbReference type="InterPro" id="IPR008823">
    <property type="entry name" value="RuvB_C"/>
</dbReference>
<dbReference type="InterPro" id="IPR036388">
    <property type="entry name" value="WH-like_DNA-bd_sf"/>
</dbReference>
<dbReference type="InterPro" id="IPR036390">
    <property type="entry name" value="WH_DNA-bd_sf"/>
</dbReference>
<dbReference type="NCBIfam" id="NF000868">
    <property type="entry name" value="PRK00080.1"/>
    <property type="match status" value="1"/>
</dbReference>
<dbReference type="NCBIfam" id="TIGR00635">
    <property type="entry name" value="ruvB"/>
    <property type="match status" value="1"/>
</dbReference>
<dbReference type="PANTHER" id="PTHR42848">
    <property type="match status" value="1"/>
</dbReference>
<dbReference type="PANTHER" id="PTHR42848:SF1">
    <property type="entry name" value="HOLLIDAY JUNCTION BRANCH MIGRATION COMPLEX SUBUNIT RUVB"/>
    <property type="match status" value="1"/>
</dbReference>
<dbReference type="Pfam" id="PF17864">
    <property type="entry name" value="AAA_lid_4"/>
    <property type="match status" value="1"/>
</dbReference>
<dbReference type="Pfam" id="PF05491">
    <property type="entry name" value="RuvB_C"/>
    <property type="match status" value="1"/>
</dbReference>
<dbReference type="Pfam" id="PF05496">
    <property type="entry name" value="RuvB_N"/>
    <property type="match status" value="1"/>
</dbReference>
<dbReference type="SMART" id="SM00382">
    <property type="entry name" value="AAA"/>
    <property type="match status" value="1"/>
</dbReference>
<dbReference type="SUPFAM" id="SSF52540">
    <property type="entry name" value="P-loop containing nucleoside triphosphate hydrolases"/>
    <property type="match status" value="1"/>
</dbReference>
<dbReference type="SUPFAM" id="SSF46785">
    <property type="entry name" value="Winged helix' DNA-binding domain"/>
    <property type="match status" value="1"/>
</dbReference>
<reference key="1">
    <citation type="journal article" date="2011" name="MBio">
        <title>Novel metabolic attributes of the genus Cyanothece, comprising a group of unicellular nitrogen-fixing Cyanobacteria.</title>
        <authorList>
            <person name="Bandyopadhyay A."/>
            <person name="Elvitigala T."/>
            <person name="Welsh E."/>
            <person name="Stockel J."/>
            <person name="Liberton M."/>
            <person name="Min H."/>
            <person name="Sherman L.A."/>
            <person name="Pakrasi H.B."/>
        </authorList>
    </citation>
    <scope>NUCLEOTIDE SEQUENCE [LARGE SCALE GENOMIC DNA]</scope>
    <source>
        <strain>PCC 7425 / ATCC 29141</strain>
    </source>
</reference>